<dbReference type="EC" id="2.7.1.24" evidence="1"/>
<dbReference type="EMBL" id="AE003849">
    <property type="protein sequence ID" value="AAF85333.1"/>
    <property type="status" value="ALT_INIT"/>
    <property type="molecule type" value="Genomic_DNA"/>
</dbReference>
<dbReference type="PIR" id="D82546">
    <property type="entry name" value="D82546"/>
</dbReference>
<dbReference type="RefSeq" id="WP_023907058.1">
    <property type="nucleotide sequence ID" value="NC_002488.3"/>
</dbReference>
<dbReference type="SMR" id="Q9PAI2"/>
<dbReference type="STRING" id="160492.XF_2536"/>
<dbReference type="KEGG" id="xfa:XF_2536"/>
<dbReference type="eggNOG" id="COG0237">
    <property type="taxonomic scope" value="Bacteria"/>
</dbReference>
<dbReference type="HOGENOM" id="CLU_057180_1_2_6"/>
<dbReference type="UniPathway" id="UPA00241">
    <property type="reaction ID" value="UER00356"/>
</dbReference>
<dbReference type="Proteomes" id="UP000000812">
    <property type="component" value="Chromosome"/>
</dbReference>
<dbReference type="GO" id="GO:0005737">
    <property type="term" value="C:cytoplasm"/>
    <property type="evidence" value="ECO:0007669"/>
    <property type="project" value="UniProtKB-SubCell"/>
</dbReference>
<dbReference type="GO" id="GO:0005524">
    <property type="term" value="F:ATP binding"/>
    <property type="evidence" value="ECO:0007669"/>
    <property type="project" value="UniProtKB-UniRule"/>
</dbReference>
<dbReference type="GO" id="GO:0004140">
    <property type="term" value="F:dephospho-CoA kinase activity"/>
    <property type="evidence" value="ECO:0007669"/>
    <property type="project" value="UniProtKB-UniRule"/>
</dbReference>
<dbReference type="GO" id="GO:0015937">
    <property type="term" value="P:coenzyme A biosynthetic process"/>
    <property type="evidence" value="ECO:0007669"/>
    <property type="project" value="UniProtKB-UniRule"/>
</dbReference>
<dbReference type="CDD" id="cd02022">
    <property type="entry name" value="DPCK"/>
    <property type="match status" value="1"/>
</dbReference>
<dbReference type="Gene3D" id="3.40.50.300">
    <property type="entry name" value="P-loop containing nucleotide triphosphate hydrolases"/>
    <property type="match status" value="1"/>
</dbReference>
<dbReference type="HAMAP" id="MF_00376">
    <property type="entry name" value="Dephospho_CoA_kinase"/>
    <property type="match status" value="1"/>
</dbReference>
<dbReference type="InterPro" id="IPR001977">
    <property type="entry name" value="Depp_CoAkinase"/>
</dbReference>
<dbReference type="InterPro" id="IPR027417">
    <property type="entry name" value="P-loop_NTPase"/>
</dbReference>
<dbReference type="NCBIfam" id="TIGR00152">
    <property type="entry name" value="dephospho-CoA kinase"/>
    <property type="match status" value="1"/>
</dbReference>
<dbReference type="PANTHER" id="PTHR10695:SF46">
    <property type="entry name" value="BIFUNCTIONAL COENZYME A SYNTHASE-RELATED"/>
    <property type="match status" value="1"/>
</dbReference>
<dbReference type="PANTHER" id="PTHR10695">
    <property type="entry name" value="DEPHOSPHO-COA KINASE-RELATED"/>
    <property type="match status" value="1"/>
</dbReference>
<dbReference type="Pfam" id="PF01121">
    <property type="entry name" value="CoaE"/>
    <property type="match status" value="1"/>
</dbReference>
<dbReference type="SUPFAM" id="SSF52540">
    <property type="entry name" value="P-loop containing nucleoside triphosphate hydrolases"/>
    <property type="match status" value="1"/>
</dbReference>
<dbReference type="PROSITE" id="PS51219">
    <property type="entry name" value="DPCK"/>
    <property type="match status" value="1"/>
</dbReference>
<proteinExistence type="inferred from homology"/>
<keyword id="KW-0067">ATP-binding</keyword>
<keyword id="KW-0173">Coenzyme A biosynthesis</keyword>
<keyword id="KW-0963">Cytoplasm</keyword>
<keyword id="KW-0418">Kinase</keyword>
<keyword id="KW-0547">Nucleotide-binding</keyword>
<keyword id="KW-0808">Transferase</keyword>
<feature type="chain" id="PRO_0000173036" description="Dephospho-CoA kinase">
    <location>
        <begin position="1"/>
        <end position="207"/>
    </location>
</feature>
<feature type="domain" description="DPCK" evidence="1">
    <location>
        <begin position="5"/>
        <end position="203"/>
    </location>
</feature>
<feature type="binding site" evidence="1">
    <location>
        <begin position="13"/>
        <end position="18"/>
    </location>
    <ligand>
        <name>ATP</name>
        <dbReference type="ChEBI" id="CHEBI:30616"/>
    </ligand>
</feature>
<sequence>MSVYAVGLTGGIACGKSLLAQLFEALNTTVVDADIIARQVVEPGPVLNCIVARFGSKILRADGCLDRRFLRQRVFADVAERKALEAIVHPVIRSGLKQAAAAAAGPYVLVVIPLLAEAGGRIGYPWLQRILVVDAIPEVQHARLMQRDSIDAEQASLMIAAQIGRKERLAIADDIVFNDGDPVHLGGQVCNLDARYRALASVFSDVD</sequence>
<protein>
    <recommendedName>
        <fullName evidence="1">Dephospho-CoA kinase</fullName>
        <ecNumber evidence="1">2.7.1.24</ecNumber>
    </recommendedName>
    <alternativeName>
        <fullName evidence="1">Dephosphocoenzyme A kinase</fullName>
    </alternativeName>
</protein>
<evidence type="ECO:0000255" key="1">
    <source>
        <dbReference type="HAMAP-Rule" id="MF_00376"/>
    </source>
</evidence>
<evidence type="ECO:0000305" key="2"/>
<reference key="1">
    <citation type="journal article" date="2000" name="Nature">
        <title>The genome sequence of the plant pathogen Xylella fastidiosa.</title>
        <authorList>
            <person name="Simpson A.J.G."/>
            <person name="Reinach F.C."/>
            <person name="Arruda P."/>
            <person name="Abreu F.A."/>
            <person name="Acencio M."/>
            <person name="Alvarenga R."/>
            <person name="Alves L.M.C."/>
            <person name="Araya J.E."/>
            <person name="Baia G.S."/>
            <person name="Baptista C.S."/>
            <person name="Barros M.H."/>
            <person name="Bonaccorsi E.D."/>
            <person name="Bordin S."/>
            <person name="Bove J.M."/>
            <person name="Briones M.R.S."/>
            <person name="Bueno M.R.P."/>
            <person name="Camargo A.A."/>
            <person name="Camargo L.E.A."/>
            <person name="Carraro D.M."/>
            <person name="Carrer H."/>
            <person name="Colauto N.B."/>
            <person name="Colombo C."/>
            <person name="Costa F.F."/>
            <person name="Costa M.C.R."/>
            <person name="Costa-Neto C.M."/>
            <person name="Coutinho L.L."/>
            <person name="Cristofani M."/>
            <person name="Dias-Neto E."/>
            <person name="Docena C."/>
            <person name="El-Dorry H."/>
            <person name="Facincani A.P."/>
            <person name="Ferreira A.J.S."/>
            <person name="Ferreira V.C.A."/>
            <person name="Ferro J.A."/>
            <person name="Fraga J.S."/>
            <person name="Franca S.C."/>
            <person name="Franco M.C."/>
            <person name="Frohme M."/>
            <person name="Furlan L.R."/>
            <person name="Garnier M."/>
            <person name="Goldman G.H."/>
            <person name="Goldman M.H.S."/>
            <person name="Gomes S.L."/>
            <person name="Gruber A."/>
            <person name="Ho P.L."/>
            <person name="Hoheisel J.D."/>
            <person name="Junqueira M.L."/>
            <person name="Kemper E.L."/>
            <person name="Kitajima J.P."/>
            <person name="Krieger J.E."/>
            <person name="Kuramae E.E."/>
            <person name="Laigret F."/>
            <person name="Lambais M.R."/>
            <person name="Leite L.C.C."/>
            <person name="Lemos E.G.M."/>
            <person name="Lemos M.V.F."/>
            <person name="Lopes S.A."/>
            <person name="Lopes C.R."/>
            <person name="Machado J.A."/>
            <person name="Machado M.A."/>
            <person name="Madeira A.M.B.N."/>
            <person name="Madeira H.M.F."/>
            <person name="Marino C.L."/>
            <person name="Marques M.V."/>
            <person name="Martins E.A.L."/>
            <person name="Martins E.M.F."/>
            <person name="Matsukuma A.Y."/>
            <person name="Menck C.F.M."/>
            <person name="Miracca E.C."/>
            <person name="Miyaki C.Y."/>
            <person name="Monteiro-Vitorello C.B."/>
            <person name="Moon D.H."/>
            <person name="Nagai M.A."/>
            <person name="Nascimento A.L.T.O."/>
            <person name="Netto L.E.S."/>
            <person name="Nhani A. Jr."/>
            <person name="Nobrega F.G."/>
            <person name="Nunes L.R."/>
            <person name="Oliveira M.A."/>
            <person name="de Oliveira M.C."/>
            <person name="de Oliveira R.C."/>
            <person name="Palmieri D.A."/>
            <person name="Paris A."/>
            <person name="Peixoto B.R."/>
            <person name="Pereira G.A.G."/>
            <person name="Pereira H.A. Jr."/>
            <person name="Pesquero J.B."/>
            <person name="Quaggio R.B."/>
            <person name="Roberto P.G."/>
            <person name="Rodrigues V."/>
            <person name="de Rosa A.J.M."/>
            <person name="de Rosa V.E. Jr."/>
            <person name="de Sa R.G."/>
            <person name="Santelli R.V."/>
            <person name="Sawasaki H.E."/>
            <person name="da Silva A.C.R."/>
            <person name="da Silva A.M."/>
            <person name="da Silva F.R."/>
            <person name="Silva W.A. Jr."/>
            <person name="da Silveira J.F."/>
            <person name="Silvestri M.L.Z."/>
            <person name="Siqueira W.J."/>
            <person name="de Souza A.A."/>
            <person name="de Souza A.P."/>
            <person name="Terenzi M.F."/>
            <person name="Truffi D."/>
            <person name="Tsai S.M."/>
            <person name="Tsuhako M.H."/>
            <person name="Vallada H."/>
            <person name="Van Sluys M.A."/>
            <person name="Verjovski-Almeida S."/>
            <person name="Vettore A.L."/>
            <person name="Zago M.A."/>
            <person name="Zatz M."/>
            <person name="Meidanis J."/>
            <person name="Setubal J.C."/>
        </authorList>
    </citation>
    <scope>NUCLEOTIDE SEQUENCE [LARGE SCALE GENOMIC DNA]</scope>
    <source>
        <strain>9a5c</strain>
    </source>
</reference>
<name>COAE_XYLFA</name>
<organism>
    <name type="scientific">Xylella fastidiosa (strain 9a5c)</name>
    <dbReference type="NCBI Taxonomy" id="160492"/>
    <lineage>
        <taxon>Bacteria</taxon>
        <taxon>Pseudomonadati</taxon>
        <taxon>Pseudomonadota</taxon>
        <taxon>Gammaproteobacteria</taxon>
        <taxon>Lysobacterales</taxon>
        <taxon>Lysobacteraceae</taxon>
        <taxon>Xylella</taxon>
    </lineage>
</organism>
<comment type="function">
    <text evidence="1">Catalyzes the phosphorylation of the 3'-hydroxyl group of dephosphocoenzyme A to form coenzyme A.</text>
</comment>
<comment type="catalytic activity">
    <reaction evidence="1">
        <text>3'-dephospho-CoA + ATP = ADP + CoA + H(+)</text>
        <dbReference type="Rhea" id="RHEA:18245"/>
        <dbReference type="ChEBI" id="CHEBI:15378"/>
        <dbReference type="ChEBI" id="CHEBI:30616"/>
        <dbReference type="ChEBI" id="CHEBI:57287"/>
        <dbReference type="ChEBI" id="CHEBI:57328"/>
        <dbReference type="ChEBI" id="CHEBI:456216"/>
        <dbReference type="EC" id="2.7.1.24"/>
    </reaction>
</comment>
<comment type="pathway">
    <text evidence="1">Cofactor biosynthesis; coenzyme A biosynthesis; CoA from (R)-pantothenate: step 5/5.</text>
</comment>
<comment type="subcellular location">
    <subcellularLocation>
        <location evidence="1">Cytoplasm</location>
    </subcellularLocation>
</comment>
<comment type="similarity">
    <text evidence="1 2">Belongs to the CoaE family.</text>
</comment>
<comment type="sequence caution" evidence="2">
    <conflict type="erroneous initiation">
        <sequence resource="EMBL-CDS" id="AAF85333"/>
    </conflict>
</comment>
<accession>Q9PAI2</accession>
<gene>
    <name evidence="1" type="primary">coaE</name>
    <name type="ordered locus">XF_2536</name>
</gene>